<reference evidence="6" key="1">
    <citation type="journal article" date="1993" name="Can. J. Microbiol.">
        <title>Rapid comparison of the cytochrome c3 gene from nine strains of Desulfovibrio vulgaris using polymerase chain reaction amplification.</title>
        <authorList>
            <person name="Kwoh D.Y."/>
            <person name="Vedvick T.S."/>
            <person name="McCue A.F."/>
            <person name="Gevertz D."/>
        </authorList>
    </citation>
    <scope>PROTEIN SEQUENCE</scope>
    <source>
        <strain evidence="4">NCIMB 8456</strain>
    </source>
</reference>
<protein>
    <recommendedName>
        <fullName>Cytochrome c3-1</fullName>
    </recommendedName>
</protein>
<feature type="chain" id="PRO_0000108362" description="Cytochrome c3-1">
    <location>
        <begin position="1" status="less than"/>
        <end position="23" status="greater than"/>
    </location>
</feature>
<feature type="region of interest" description="Disordered" evidence="3">
    <location>
        <begin position="1"/>
        <end position="23"/>
    </location>
</feature>
<feature type="binding site" description="axial binding residue" evidence="2">
    <location>
        <position position="23"/>
    </location>
    <ligand>
        <name>heme</name>
        <dbReference type="ChEBI" id="CHEBI:30413"/>
        <label>1</label>
    </ligand>
    <ligandPart>
        <name>Fe</name>
        <dbReference type="ChEBI" id="CHEBI:18248"/>
    </ligandPart>
</feature>
<feature type="non-terminal residue" evidence="5">
    <location>
        <position position="1"/>
    </location>
</feature>
<feature type="non-terminal residue" evidence="5">
    <location>
        <position position="23"/>
    </location>
</feature>
<evidence type="ECO:0000250" key="1"/>
<evidence type="ECO:0000250" key="2">
    <source>
        <dbReference type="UniProtKB" id="P00132"/>
    </source>
</evidence>
<evidence type="ECO:0000256" key="3">
    <source>
        <dbReference type="SAM" id="MobiDB-lite"/>
    </source>
</evidence>
<evidence type="ECO:0000269" key="4">
    <source>
    </source>
</evidence>
<evidence type="ECO:0000303" key="5">
    <source>
    </source>
</evidence>
<evidence type="ECO:0000305" key="6"/>
<proteinExistence type="evidence at protein level"/>
<organism>
    <name type="scientific">Nitratidesulfovibrio vulgaris</name>
    <name type="common">Desulfovibrio vulgaris</name>
    <dbReference type="NCBI Taxonomy" id="881"/>
    <lineage>
        <taxon>Bacteria</taxon>
        <taxon>Pseudomonadati</taxon>
        <taxon>Thermodesulfobacteriota</taxon>
        <taxon>Desulfovibrionia</taxon>
        <taxon>Desulfovibrionales</taxon>
        <taxon>Desulfovibrionaceae</taxon>
        <taxon>Nitratidesulfovibrio</taxon>
    </lineage>
</organism>
<name>CYC31_NITVL</name>
<sequence length="23" mass="2478">AAPKAPADGLKMDKTKQXVVFNH</sequence>
<comment type="function">
    <text evidence="2">Participates in sulfate respiration coupled with phosphorylation by transferring electrons from the enzyme dehydrogenase to ferredoxin.</text>
</comment>
<comment type="subcellular location">
    <subcellularLocation>
        <location evidence="1">Periplasm</location>
    </subcellularLocation>
</comment>
<comment type="PTM">
    <text evidence="2">Binds 4 heme groups per subunit.</text>
</comment>
<accession>P81149</accession>
<dbReference type="GO" id="GO:0042597">
    <property type="term" value="C:periplasmic space"/>
    <property type="evidence" value="ECO:0007669"/>
    <property type="project" value="UniProtKB-SubCell"/>
</dbReference>
<dbReference type="GO" id="GO:0046872">
    <property type="term" value="F:metal ion binding"/>
    <property type="evidence" value="ECO:0007669"/>
    <property type="project" value="UniProtKB-KW"/>
</dbReference>
<dbReference type="GO" id="GO:0009061">
    <property type="term" value="P:anaerobic respiration"/>
    <property type="evidence" value="ECO:0007669"/>
    <property type="project" value="UniProtKB-KW"/>
</dbReference>
<keyword id="KW-0903">Direct protein sequencing</keyword>
<keyword id="KW-0249">Electron transport</keyword>
<keyword id="KW-0349">Heme</keyword>
<keyword id="KW-0408">Iron</keyword>
<keyword id="KW-0479">Metal-binding</keyword>
<keyword id="KW-0574">Periplasm</keyword>
<keyword id="KW-0763">Sulfate respiration</keyword>
<keyword id="KW-0813">Transport</keyword>